<keyword id="KW-0007">Acetylation</keyword>
<keyword id="KW-0963">Cytoplasm</keyword>
<keyword id="KW-1185">Reference proteome</keyword>
<keyword id="KW-0687">Ribonucleoprotein</keyword>
<keyword id="KW-0689">Ribosomal protein</keyword>
<protein>
    <recommendedName>
        <fullName evidence="1">Small ribosomal subunit protein eS1</fullName>
    </recommendedName>
    <alternativeName>
        <fullName evidence="2">40S ribosomal protein S1</fullName>
    </alternativeName>
</protein>
<proteinExistence type="inferred from homology"/>
<dbReference type="EMBL" id="CM003154">
    <property type="protein sequence ID" value="KIS67174.1"/>
    <property type="molecule type" value="Genomic_DNA"/>
</dbReference>
<dbReference type="RefSeq" id="XP_011391353.1">
    <property type="nucleotide sequence ID" value="XM_011393051.1"/>
</dbReference>
<dbReference type="SMR" id="Q4P4C2"/>
<dbReference type="FunCoup" id="Q4P4C2">
    <property type="interactions" value="475"/>
</dbReference>
<dbReference type="STRING" id="237631.Q4P4C2"/>
<dbReference type="EnsemblFungi" id="KIS67174">
    <property type="protein sequence ID" value="KIS67174"/>
    <property type="gene ID" value="UMAG_10711"/>
</dbReference>
<dbReference type="GeneID" id="23566704"/>
<dbReference type="KEGG" id="uma:UMAG_10711"/>
<dbReference type="VEuPathDB" id="FungiDB:UMAG_10711"/>
<dbReference type="eggNOG" id="KOG1628">
    <property type="taxonomic scope" value="Eukaryota"/>
</dbReference>
<dbReference type="InParanoid" id="Q4P4C2"/>
<dbReference type="OrthoDB" id="9834376at2759"/>
<dbReference type="Proteomes" id="UP000000561">
    <property type="component" value="Chromosome 15"/>
</dbReference>
<dbReference type="GO" id="GO:0005829">
    <property type="term" value="C:cytosol"/>
    <property type="evidence" value="ECO:0000318"/>
    <property type="project" value="GO_Central"/>
</dbReference>
<dbReference type="GO" id="GO:0022627">
    <property type="term" value="C:cytosolic small ribosomal subunit"/>
    <property type="evidence" value="ECO:0007669"/>
    <property type="project" value="UniProtKB-UniRule"/>
</dbReference>
<dbReference type="GO" id="GO:0003735">
    <property type="term" value="F:structural constituent of ribosome"/>
    <property type="evidence" value="ECO:0007669"/>
    <property type="project" value="UniProtKB-UniRule"/>
</dbReference>
<dbReference type="GO" id="GO:0006412">
    <property type="term" value="P:translation"/>
    <property type="evidence" value="ECO:0007669"/>
    <property type="project" value="UniProtKB-UniRule"/>
</dbReference>
<dbReference type="HAMAP" id="MF_03122">
    <property type="entry name" value="Ribosomal_eS1_euk"/>
    <property type="match status" value="1"/>
</dbReference>
<dbReference type="InterPro" id="IPR001593">
    <property type="entry name" value="Ribosomal_eS1"/>
</dbReference>
<dbReference type="InterPro" id="IPR018281">
    <property type="entry name" value="Ribosomal_eS1_CS"/>
</dbReference>
<dbReference type="InterPro" id="IPR027500">
    <property type="entry name" value="Ribosomal_eS1_euk"/>
</dbReference>
<dbReference type="PANTHER" id="PTHR11830">
    <property type="entry name" value="40S RIBOSOMAL PROTEIN S3A"/>
    <property type="match status" value="1"/>
</dbReference>
<dbReference type="Pfam" id="PF01015">
    <property type="entry name" value="Ribosomal_S3Ae"/>
    <property type="match status" value="1"/>
</dbReference>
<dbReference type="SMART" id="SM01397">
    <property type="entry name" value="Ribosomal_S3Ae"/>
    <property type="match status" value="1"/>
</dbReference>
<dbReference type="PROSITE" id="PS01191">
    <property type="entry name" value="RIBOSOMAL_S3AE"/>
    <property type="match status" value="1"/>
</dbReference>
<sequence>MAVGKNKKLSKGKGQKKRAVDPFTRKDWYDIKAPTFFENRNVGKTFVNRSQGLKNADDSLKGRIVEASLADLNKDDEQAYRKFKLKVDGIQGRTCLTNFYGMDFTSDKLRSLVRKWQSLIEAHQDVKTTDGYLLRVFVIAFTKKRANQVKKNTYAKSSHIRAIRQKMFEIVQREANSCDLREFVAKLIPEVIGREVEKATQGIFPLKDVYVRKVKVLKAPKDDLNKLLEVHGGAAIAGAEDAGVKARNTEFKEPAPLASV</sequence>
<name>RS3A_MYCMD</name>
<reference key="1">
    <citation type="journal article" date="2006" name="Nature">
        <title>Insights from the genome of the biotrophic fungal plant pathogen Ustilago maydis.</title>
        <authorList>
            <person name="Kaemper J."/>
            <person name="Kahmann R."/>
            <person name="Boelker M."/>
            <person name="Ma L.-J."/>
            <person name="Brefort T."/>
            <person name="Saville B.J."/>
            <person name="Banuett F."/>
            <person name="Kronstad J.W."/>
            <person name="Gold S.E."/>
            <person name="Mueller O."/>
            <person name="Perlin M.H."/>
            <person name="Woesten H.A.B."/>
            <person name="de Vries R."/>
            <person name="Ruiz-Herrera J."/>
            <person name="Reynaga-Pena C.G."/>
            <person name="Snetselaar K."/>
            <person name="McCann M."/>
            <person name="Perez-Martin J."/>
            <person name="Feldbruegge M."/>
            <person name="Basse C.W."/>
            <person name="Steinberg G."/>
            <person name="Ibeas J.I."/>
            <person name="Holloman W."/>
            <person name="Guzman P."/>
            <person name="Farman M.L."/>
            <person name="Stajich J.E."/>
            <person name="Sentandreu R."/>
            <person name="Gonzalez-Prieto J.M."/>
            <person name="Kennell J.C."/>
            <person name="Molina L."/>
            <person name="Schirawski J."/>
            <person name="Mendoza-Mendoza A."/>
            <person name="Greilinger D."/>
            <person name="Muench K."/>
            <person name="Roessel N."/>
            <person name="Scherer M."/>
            <person name="Vranes M."/>
            <person name="Ladendorf O."/>
            <person name="Vincon V."/>
            <person name="Fuchs U."/>
            <person name="Sandrock B."/>
            <person name="Meng S."/>
            <person name="Ho E.C.H."/>
            <person name="Cahill M.J."/>
            <person name="Boyce K.J."/>
            <person name="Klose J."/>
            <person name="Klosterman S.J."/>
            <person name="Deelstra H.J."/>
            <person name="Ortiz-Castellanos L."/>
            <person name="Li W."/>
            <person name="Sanchez-Alonso P."/>
            <person name="Schreier P.H."/>
            <person name="Haeuser-Hahn I."/>
            <person name="Vaupel M."/>
            <person name="Koopmann E."/>
            <person name="Friedrich G."/>
            <person name="Voss H."/>
            <person name="Schlueter T."/>
            <person name="Margolis J."/>
            <person name="Platt D."/>
            <person name="Swimmer C."/>
            <person name="Gnirke A."/>
            <person name="Chen F."/>
            <person name="Vysotskaia V."/>
            <person name="Mannhaupt G."/>
            <person name="Gueldener U."/>
            <person name="Muensterkoetter M."/>
            <person name="Haase D."/>
            <person name="Oesterheld M."/>
            <person name="Mewes H.-W."/>
            <person name="Mauceli E.W."/>
            <person name="DeCaprio D."/>
            <person name="Wade C.M."/>
            <person name="Butler J."/>
            <person name="Young S.K."/>
            <person name="Jaffe D.B."/>
            <person name="Calvo S.E."/>
            <person name="Nusbaum C."/>
            <person name="Galagan J.E."/>
            <person name="Birren B.W."/>
        </authorList>
    </citation>
    <scope>NUCLEOTIDE SEQUENCE [LARGE SCALE GENOMIC DNA]</scope>
    <source>
        <strain>DSM 14603 / FGSC 9021 / UM521</strain>
    </source>
</reference>
<reference key="2">
    <citation type="submission" date="2014-09" db="EMBL/GenBank/DDBJ databases">
        <authorList>
            <person name="Gueldener U."/>
            <person name="Muensterkoetter M."/>
            <person name="Walter M.C."/>
            <person name="Mannhaupt G."/>
            <person name="Kahmann R."/>
        </authorList>
    </citation>
    <scope>GENOME REANNOTATION</scope>
    <source>
        <strain>DSM 14603 / FGSC 9021 / UM521</strain>
    </source>
</reference>
<gene>
    <name evidence="1" type="primary">RPS1</name>
    <name type="ORF">UMAG_10711</name>
</gene>
<feature type="initiator methionine" description="Removed" evidence="1">
    <location>
        <position position="1"/>
    </location>
</feature>
<feature type="chain" id="PRO_0000389416" description="Small ribosomal subunit protein eS1">
    <location>
        <begin position="2"/>
        <end position="260"/>
    </location>
</feature>
<feature type="modified residue" description="N-acetylalanine; partial" evidence="1">
    <location>
        <position position="2"/>
    </location>
</feature>
<comment type="subunit">
    <text evidence="1">Component of the small ribosomal subunit. Mature ribosomes consist of a small (40S) and a large (60S) subunit. The 40S subunit contains about 33 different proteins and 1 molecule of RNA (18S). The 60S subunit contains about 49 different proteins and 3 molecules of RNA (25S, 5.8S and 5S).</text>
</comment>
<comment type="subcellular location">
    <subcellularLocation>
        <location evidence="1">Cytoplasm</location>
    </subcellularLocation>
</comment>
<comment type="similarity">
    <text evidence="1">Belongs to the eukaryotic ribosomal protein eS1 family.</text>
</comment>
<accession>Q4P4C2</accession>
<accession>A0A0D1DSA4</accession>
<evidence type="ECO:0000255" key="1">
    <source>
        <dbReference type="HAMAP-Rule" id="MF_03122"/>
    </source>
</evidence>
<evidence type="ECO:0000305" key="2"/>
<organism>
    <name type="scientific">Mycosarcoma maydis</name>
    <name type="common">Corn smut fungus</name>
    <name type="synonym">Ustilago maydis</name>
    <dbReference type="NCBI Taxonomy" id="5270"/>
    <lineage>
        <taxon>Eukaryota</taxon>
        <taxon>Fungi</taxon>
        <taxon>Dikarya</taxon>
        <taxon>Basidiomycota</taxon>
        <taxon>Ustilaginomycotina</taxon>
        <taxon>Ustilaginomycetes</taxon>
        <taxon>Ustilaginales</taxon>
        <taxon>Ustilaginaceae</taxon>
        <taxon>Mycosarcoma</taxon>
    </lineage>
</organism>